<dbReference type="EMBL" id="AE013599">
    <property type="protein sequence ID" value="AAF58519.3"/>
    <property type="molecule type" value="Genomic_DNA"/>
</dbReference>
<dbReference type="RefSeq" id="NP_523711.3">
    <property type="nucleotide sequence ID" value="NM_078987.3"/>
</dbReference>
<dbReference type="SMR" id="Q9V6A9"/>
<dbReference type="BioGRID" id="62127">
    <property type="interactions" value="1"/>
</dbReference>
<dbReference type="DIP" id="DIP-21103N"/>
<dbReference type="FunCoup" id="Q9V6A9">
    <property type="interactions" value="29"/>
</dbReference>
<dbReference type="IntAct" id="Q9V6A9">
    <property type="interactions" value="1"/>
</dbReference>
<dbReference type="STRING" id="7227.FBpp0087029"/>
<dbReference type="PaxDb" id="7227-FBpp0087029"/>
<dbReference type="EnsemblMetazoa" id="FBtr0087918">
    <property type="protein sequence ID" value="FBpp0087029"/>
    <property type="gene ID" value="FBgn0033727"/>
</dbReference>
<dbReference type="GeneID" id="36350"/>
<dbReference type="KEGG" id="dme:Dmel_CG13158"/>
<dbReference type="AGR" id="FB:FBgn0033727"/>
<dbReference type="CTD" id="36350"/>
<dbReference type="FlyBase" id="FBgn0033727">
    <property type="gene designation" value="Or49a"/>
</dbReference>
<dbReference type="VEuPathDB" id="VectorBase:FBgn0033727"/>
<dbReference type="eggNOG" id="ENOG502SR0T">
    <property type="taxonomic scope" value="Eukaryota"/>
</dbReference>
<dbReference type="GeneTree" id="ENSGT00560000077544"/>
<dbReference type="HOGENOM" id="CLU_033399_0_0_1"/>
<dbReference type="InParanoid" id="Q9V6A9"/>
<dbReference type="OMA" id="NFYEASM"/>
<dbReference type="OrthoDB" id="8185860at2759"/>
<dbReference type="PhylomeDB" id="Q9V6A9"/>
<dbReference type="BioGRID-ORCS" id="36350">
    <property type="hits" value="0 hits in 1 CRISPR screen"/>
</dbReference>
<dbReference type="GenomeRNAi" id="36350"/>
<dbReference type="PRO" id="PR:Q9V6A9"/>
<dbReference type="Proteomes" id="UP000000803">
    <property type="component" value="Chromosome 2R"/>
</dbReference>
<dbReference type="ExpressionAtlas" id="Q9V6A9">
    <property type="expression patterns" value="differential"/>
</dbReference>
<dbReference type="GO" id="GO:0034703">
    <property type="term" value="C:cation channel complex"/>
    <property type="evidence" value="ECO:0000250"/>
    <property type="project" value="FlyBase"/>
</dbReference>
<dbReference type="GO" id="GO:0032590">
    <property type="term" value="C:dendrite membrane"/>
    <property type="evidence" value="ECO:0000250"/>
    <property type="project" value="FlyBase"/>
</dbReference>
<dbReference type="GO" id="GO:0016020">
    <property type="term" value="C:membrane"/>
    <property type="evidence" value="ECO:0000303"/>
    <property type="project" value="UniProtKB"/>
</dbReference>
<dbReference type="GO" id="GO:0005886">
    <property type="term" value="C:plasma membrane"/>
    <property type="evidence" value="ECO:0000250"/>
    <property type="project" value="FlyBase"/>
</dbReference>
<dbReference type="GO" id="GO:0170020">
    <property type="term" value="F:ionotropic olfactory receptor activity"/>
    <property type="evidence" value="ECO:0000250"/>
    <property type="project" value="FlyBase"/>
</dbReference>
<dbReference type="GO" id="GO:0005549">
    <property type="term" value="F:odorant binding"/>
    <property type="evidence" value="ECO:0000250"/>
    <property type="project" value="FlyBase"/>
</dbReference>
<dbReference type="GO" id="GO:0004984">
    <property type="term" value="F:olfactory receptor activity"/>
    <property type="evidence" value="ECO:0000318"/>
    <property type="project" value="GO_Central"/>
</dbReference>
<dbReference type="GO" id="GO:0050911">
    <property type="term" value="P:detection of chemical stimulus involved in sensory perception of smell"/>
    <property type="evidence" value="ECO:0000315"/>
    <property type="project" value="FlyBase"/>
</dbReference>
<dbReference type="GO" id="GO:0042048">
    <property type="term" value="P:olfactory behavior"/>
    <property type="evidence" value="ECO:0000315"/>
    <property type="project" value="FlyBase"/>
</dbReference>
<dbReference type="GO" id="GO:0007608">
    <property type="term" value="P:sensory perception of smell"/>
    <property type="evidence" value="ECO:0000303"/>
    <property type="project" value="UniProtKB"/>
</dbReference>
<dbReference type="GO" id="GO:0007165">
    <property type="term" value="P:signal transduction"/>
    <property type="evidence" value="ECO:0007669"/>
    <property type="project" value="UniProtKB-KW"/>
</dbReference>
<dbReference type="InterPro" id="IPR004117">
    <property type="entry name" value="7tm6_olfct_rcpt"/>
</dbReference>
<dbReference type="PANTHER" id="PTHR21137">
    <property type="entry name" value="ODORANT RECEPTOR"/>
    <property type="match status" value="1"/>
</dbReference>
<dbReference type="PANTHER" id="PTHR21137:SF44">
    <property type="entry name" value="ODORANT RECEPTOR 13A-RELATED"/>
    <property type="match status" value="1"/>
</dbReference>
<dbReference type="Pfam" id="PF02949">
    <property type="entry name" value="7tm_6"/>
    <property type="match status" value="1"/>
</dbReference>
<evidence type="ECO:0000250" key="1"/>
<evidence type="ECO:0000255" key="2"/>
<evidence type="ECO:0000269" key="3">
    <source>
    </source>
</evidence>
<evidence type="ECO:0000269" key="4">
    <source>
    </source>
</evidence>
<evidence type="ECO:0000305" key="5"/>
<gene>
    <name type="primary">Or49a</name>
    <name type="ORF">CG13158</name>
</gene>
<reference key="1">
    <citation type="journal article" date="2000" name="Science">
        <title>The genome sequence of Drosophila melanogaster.</title>
        <authorList>
            <person name="Adams M.D."/>
            <person name="Celniker S.E."/>
            <person name="Holt R.A."/>
            <person name="Evans C.A."/>
            <person name="Gocayne J.D."/>
            <person name="Amanatides P.G."/>
            <person name="Scherer S.E."/>
            <person name="Li P.W."/>
            <person name="Hoskins R.A."/>
            <person name="Galle R.F."/>
            <person name="George R.A."/>
            <person name="Lewis S.E."/>
            <person name="Richards S."/>
            <person name="Ashburner M."/>
            <person name="Henderson S.N."/>
            <person name="Sutton G.G."/>
            <person name="Wortman J.R."/>
            <person name="Yandell M.D."/>
            <person name="Zhang Q."/>
            <person name="Chen L.X."/>
            <person name="Brandon R.C."/>
            <person name="Rogers Y.-H.C."/>
            <person name="Blazej R.G."/>
            <person name="Champe M."/>
            <person name="Pfeiffer B.D."/>
            <person name="Wan K.H."/>
            <person name="Doyle C."/>
            <person name="Baxter E.G."/>
            <person name="Helt G."/>
            <person name="Nelson C.R."/>
            <person name="Miklos G.L.G."/>
            <person name="Abril J.F."/>
            <person name="Agbayani A."/>
            <person name="An H.-J."/>
            <person name="Andrews-Pfannkoch C."/>
            <person name="Baldwin D."/>
            <person name="Ballew R.M."/>
            <person name="Basu A."/>
            <person name="Baxendale J."/>
            <person name="Bayraktaroglu L."/>
            <person name="Beasley E.M."/>
            <person name="Beeson K.Y."/>
            <person name="Benos P.V."/>
            <person name="Berman B.P."/>
            <person name="Bhandari D."/>
            <person name="Bolshakov S."/>
            <person name="Borkova D."/>
            <person name="Botchan M.R."/>
            <person name="Bouck J."/>
            <person name="Brokstein P."/>
            <person name="Brottier P."/>
            <person name="Burtis K.C."/>
            <person name="Busam D.A."/>
            <person name="Butler H."/>
            <person name="Cadieu E."/>
            <person name="Center A."/>
            <person name="Chandra I."/>
            <person name="Cherry J.M."/>
            <person name="Cawley S."/>
            <person name="Dahlke C."/>
            <person name="Davenport L.B."/>
            <person name="Davies P."/>
            <person name="de Pablos B."/>
            <person name="Delcher A."/>
            <person name="Deng Z."/>
            <person name="Mays A.D."/>
            <person name="Dew I."/>
            <person name="Dietz S.M."/>
            <person name="Dodson K."/>
            <person name="Doup L.E."/>
            <person name="Downes M."/>
            <person name="Dugan-Rocha S."/>
            <person name="Dunkov B.C."/>
            <person name="Dunn P."/>
            <person name="Durbin K.J."/>
            <person name="Evangelista C.C."/>
            <person name="Ferraz C."/>
            <person name="Ferriera S."/>
            <person name="Fleischmann W."/>
            <person name="Fosler C."/>
            <person name="Gabrielian A.E."/>
            <person name="Garg N.S."/>
            <person name="Gelbart W.M."/>
            <person name="Glasser K."/>
            <person name="Glodek A."/>
            <person name="Gong F."/>
            <person name="Gorrell J.H."/>
            <person name="Gu Z."/>
            <person name="Guan P."/>
            <person name="Harris M."/>
            <person name="Harris N.L."/>
            <person name="Harvey D.A."/>
            <person name="Heiman T.J."/>
            <person name="Hernandez J.R."/>
            <person name="Houck J."/>
            <person name="Hostin D."/>
            <person name="Houston K.A."/>
            <person name="Howland T.J."/>
            <person name="Wei M.-H."/>
            <person name="Ibegwam C."/>
            <person name="Jalali M."/>
            <person name="Kalush F."/>
            <person name="Karpen G.H."/>
            <person name="Ke Z."/>
            <person name="Kennison J.A."/>
            <person name="Ketchum K.A."/>
            <person name="Kimmel B.E."/>
            <person name="Kodira C.D."/>
            <person name="Kraft C.L."/>
            <person name="Kravitz S."/>
            <person name="Kulp D."/>
            <person name="Lai Z."/>
            <person name="Lasko P."/>
            <person name="Lei Y."/>
            <person name="Levitsky A.A."/>
            <person name="Li J.H."/>
            <person name="Li Z."/>
            <person name="Liang Y."/>
            <person name="Lin X."/>
            <person name="Liu X."/>
            <person name="Mattei B."/>
            <person name="McIntosh T.C."/>
            <person name="McLeod M.P."/>
            <person name="McPherson D."/>
            <person name="Merkulov G."/>
            <person name="Milshina N.V."/>
            <person name="Mobarry C."/>
            <person name="Morris J."/>
            <person name="Moshrefi A."/>
            <person name="Mount S.M."/>
            <person name="Moy M."/>
            <person name="Murphy B."/>
            <person name="Murphy L."/>
            <person name="Muzny D.M."/>
            <person name="Nelson D.L."/>
            <person name="Nelson D.R."/>
            <person name="Nelson K.A."/>
            <person name="Nixon K."/>
            <person name="Nusskern D.R."/>
            <person name="Pacleb J.M."/>
            <person name="Palazzolo M."/>
            <person name="Pittman G.S."/>
            <person name="Pan S."/>
            <person name="Pollard J."/>
            <person name="Puri V."/>
            <person name="Reese M.G."/>
            <person name="Reinert K."/>
            <person name="Remington K."/>
            <person name="Saunders R.D.C."/>
            <person name="Scheeler F."/>
            <person name="Shen H."/>
            <person name="Shue B.C."/>
            <person name="Siden-Kiamos I."/>
            <person name="Simpson M."/>
            <person name="Skupski M.P."/>
            <person name="Smith T.J."/>
            <person name="Spier E."/>
            <person name="Spradling A.C."/>
            <person name="Stapleton M."/>
            <person name="Strong R."/>
            <person name="Sun E."/>
            <person name="Svirskas R."/>
            <person name="Tector C."/>
            <person name="Turner R."/>
            <person name="Venter E."/>
            <person name="Wang A.H."/>
            <person name="Wang X."/>
            <person name="Wang Z.-Y."/>
            <person name="Wassarman D.A."/>
            <person name="Weinstock G.M."/>
            <person name="Weissenbach J."/>
            <person name="Williams S.M."/>
            <person name="Woodage T."/>
            <person name="Worley K.C."/>
            <person name="Wu D."/>
            <person name="Yang S."/>
            <person name="Yao Q.A."/>
            <person name="Ye J."/>
            <person name="Yeh R.-F."/>
            <person name="Zaveri J.S."/>
            <person name="Zhan M."/>
            <person name="Zhang G."/>
            <person name="Zhao Q."/>
            <person name="Zheng L."/>
            <person name="Zheng X.H."/>
            <person name="Zhong F.N."/>
            <person name="Zhong W."/>
            <person name="Zhou X."/>
            <person name="Zhu S.C."/>
            <person name="Zhu X."/>
            <person name="Smith H.O."/>
            <person name="Gibbs R.A."/>
            <person name="Myers E.W."/>
            <person name="Rubin G.M."/>
            <person name="Venter J.C."/>
        </authorList>
    </citation>
    <scope>NUCLEOTIDE SEQUENCE [LARGE SCALE GENOMIC DNA]</scope>
    <source>
        <strain>Berkeley</strain>
    </source>
</reference>
<reference key="2">
    <citation type="journal article" date="2002" name="Genome Biol.">
        <title>Annotation of the Drosophila melanogaster euchromatic genome: a systematic review.</title>
        <authorList>
            <person name="Misra S."/>
            <person name="Crosby M.A."/>
            <person name="Mungall C.J."/>
            <person name="Matthews B.B."/>
            <person name="Campbell K.S."/>
            <person name="Hradecky P."/>
            <person name="Huang Y."/>
            <person name="Kaminker J.S."/>
            <person name="Millburn G.H."/>
            <person name="Prochnik S.E."/>
            <person name="Smith C.D."/>
            <person name="Tupy J.L."/>
            <person name="Whitfield E.J."/>
            <person name="Bayraktaroglu L."/>
            <person name="Berman B.P."/>
            <person name="Bettencourt B.R."/>
            <person name="Celniker S.E."/>
            <person name="de Grey A.D.N.J."/>
            <person name="Drysdale R.A."/>
            <person name="Harris N.L."/>
            <person name="Richter J."/>
            <person name="Russo S."/>
            <person name="Schroeder A.J."/>
            <person name="Shu S.Q."/>
            <person name="Stapleton M."/>
            <person name="Yamada C."/>
            <person name="Ashburner M."/>
            <person name="Gelbart W.M."/>
            <person name="Rubin G.M."/>
            <person name="Lewis S.E."/>
        </authorList>
    </citation>
    <scope>GENOME REANNOTATION</scope>
    <source>
        <strain>Berkeley</strain>
    </source>
</reference>
<reference key="3">
    <citation type="journal article" date="2011" name="J. Neurosci.">
        <title>Similar odorants elicit different behavioral and physiological responses, some supersustained.</title>
        <authorList>
            <person name="Montague S.A."/>
            <person name="Mathew D."/>
            <person name="Carlson J.R."/>
        </authorList>
    </citation>
    <scope>FUNCTION</scope>
</reference>
<reference key="4">
    <citation type="journal article" date="2011" name="PLoS ONE">
        <title>Modeling peripheral olfactory coding in Drosophila larvae.</title>
        <authorList>
            <person name="Hoare D.J."/>
            <person name="Humble J."/>
            <person name="Jin D."/>
            <person name="Gilding N."/>
            <person name="Petersen R."/>
            <person name="Cobb M."/>
            <person name="McCrohan C."/>
        </authorList>
    </citation>
    <scope>FUNCTION</scope>
</reference>
<organism>
    <name type="scientific">Drosophila melanogaster</name>
    <name type="common">Fruit fly</name>
    <dbReference type="NCBI Taxonomy" id="7227"/>
    <lineage>
        <taxon>Eukaryota</taxon>
        <taxon>Metazoa</taxon>
        <taxon>Ecdysozoa</taxon>
        <taxon>Arthropoda</taxon>
        <taxon>Hexapoda</taxon>
        <taxon>Insecta</taxon>
        <taxon>Pterygota</taxon>
        <taxon>Neoptera</taxon>
        <taxon>Endopterygota</taxon>
        <taxon>Diptera</taxon>
        <taxon>Brachycera</taxon>
        <taxon>Muscomorpha</taxon>
        <taxon>Ephydroidea</taxon>
        <taxon>Drosophilidae</taxon>
        <taxon>Drosophila</taxon>
        <taxon>Sophophora</taxon>
    </lineage>
</organism>
<comment type="function">
    <text evidence="3 4">Odorant receptor which mediates acceptance or avoidance behavior, depending on its substrates. The odorant receptor repertoire encodes a large collection of odor stimuli that vary widely in identity, intensity, and duration. May form a complex with Orco to form odorant-sensing units, providing sensitive and prolonged odorant signaling and calcium permeability. Involved in the behavioral responses to butanol and 2-heptanone.</text>
</comment>
<comment type="subunit">
    <text evidence="1">Interacts with Orco. Complexes exist early in the endomembrane system in olfactory sensory neurons (OSNs), coupling these complexes to the conserved ciliary trafficking pathway (By similarity).</text>
</comment>
<comment type="subcellular location">
    <subcellularLocation>
        <location evidence="1">Cell membrane</location>
        <topology evidence="1">Multi-pass membrane protein</topology>
    </subcellularLocation>
</comment>
<comment type="miscellaneous">
    <text>The atypical heteromeric and topological design of the odorant receptors appears to be an insect-specific solution for odor recognition, making the OR/Orco complex an attractive target for the development of highly selective insect repellents to disrupt olfactory-mediated host-seeking behaviors of insect disease vectors. Odor-evoked OR currents are independent of known G-protein-coupled second messenger pathways.</text>
</comment>
<comment type="similarity">
    <text evidence="5">Belongs to the insect chemoreceptor superfamily. Heteromeric odorant receptor channel (TC 1.A.69) family. Or49a subfamily.</text>
</comment>
<name>OR49A_DROME</name>
<accession>Q9V6A9</accession>
<proteinExistence type="inferred from homology"/>
<keyword id="KW-1003">Cell membrane</keyword>
<keyword id="KW-0472">Membrane</keyword>
<keyword id="KW-0552">Olfaction</keyword>
<keyword id="KW-0675">Receptor</keyword>
<keyword id="KW-1185">Reference proteome</keyword>
<keyword id="KW-0716">Sensory transduction</keyword>
<keyword id="KW-0807">Transducer</keyword>
<keyword id="KW-0812">Transmembrane</keyword>
<keyword id="KW-1133">Transmembrane helix</keyword>
<feature type="chain" id="PRO_0000174252" description="Odorant receptor 49a">
    <location>
        <begin position="1"/>
        <end position="396"/>
    </location>
</feature>
<feature type="topological domain" description="Cytoplasmic" evidence="2">
    <location>
        <begin position="1"/>
        <end position="6"/>
    </location>
</feature>
<feature type="transmembrane region" description="Helical; Name=1" evidence="2">
    <location>
        <begin position="7"/>
        <end position="27"/>
    </location>
</feature>
<feature type="topological domain" description="Extracellular" evidence="2">
    <location>
        <begin position="28"/>
        <end position="34"/>
    </location>
</feature>
<feature type="transmembrane region" description="Helical; Name=2" evidence="2">
    <location>
        <begin position="35"/>
        <end position="55"/>
    </location>
</feature>
<feature type="topological domain" description="Cytoplasmic" evidence="2">
    <location>
        <begin position="56"/>
        <end position="70"/>
    </location>
</feature>
<feature type="transmembrane region" description="Helical; Name=3" evidence="2">
    <location>
        <begin position="71"/>
        <end position="91"/>
    </location>
</feature>
<feature type="topological domain" description="Extracellular" evidence="2">
    <location>
        <begin position="92"/>
        <end position="141"/>
    </location>
</feature>
<feature type="transmembrane region" description="Helical; Name=4" evidence="2">
    <location>
        <begin position="142"/>
        <end position="162"/>
    </location>
</feature>
<feature type="topological domain" description="Cytoplasmic" evidence="2">
    <location>
        <begin position="163"/>
        <end position="209"/>
    </location>
</feature>
<feature type="transmembrane region" description="Helical; Name=5" evidence="2">
    <location>
        <begin position="210"/>
        <end position="230"/>
    </location>
</feature>
<feature type="topological domain" description="Extracellular" evidence="2">
    <location>
        <begin position="231"/>
        <end position="266"/>
    </location>
</feature>
<feature type="transmembrane region" description="Helical; Name=6" evidence="2">
    <location>
        <begin position="267"/>
        <end position="287"/>
    </location>
</feature>
<feature type="topological domain" description="Cytoplasmic" evidence="2">
    <location>
        <begin position="288"/>
        <end position="296"/>
    </location>
</feature>
<feature type="transmembrane region" description="Helical; Name=7" evidence="2">
    <location>
        <begin position="297"/>
        <end position="317"/>
    </location>
</feature>
<feature type="topological domain" description="Extracellular" evidence="2">
    <location>
        <begin position="318"/>
        <end position="396"/>
    </location>
</feature>
<protein>
    <recommendedName>
        <fullName>Odorant receptor 49a</fullName>
    </recommendedName>
</protein>
<sequence>MEKLRSYEDFIFMANMMFKTLGYDLFHTPKPWWRYLLVRGYFVLCTISNFYEASMVTTRIIEWESLAGSPSKIMRQGLHFFYMLSSQLKFITFMINRKRLLQLSHRLKELYPHKEQNQRKYEVNKYYLSCSTRNVLYVYYFVMVVMALEPLVQSCIMYLIGFGKADFTYKRIFPTRLTFDSEKPLGYVLAYVIDFTYSQFIVNVSLGTDLWMMCVSSQISMHLGYLANMLASIRPSPETEQQDCDFLASIIKRHQLMIRLQKDVNYVFGLLLASNLFTTSCLLCCMAYYTVVEGFNWEGISYMMLFASVAAQFYVVSSHGQMLIDLSTNLAKAAFESKWYEGSLRYKKEILILMAQAQRPLEISARGVIIISLDTFKILMTITYRFFAVIRQTVEK</sequence>